<comment type="function">
    <text evidence="1">The alpha subunit is responsible for the aldol cleavage of indoleglycerol phosphate to indole and glyceraldehyde 3-phosphate.</text>
</comment>
<comment type="catalytic activity">
    <reaction evidence="1">
        <text>(1S,2R)-1-C-(indol-3-yl)glycerol 3-phosphate + L-serine = D-glyceraldehyde 3-phosphate + L-tryptophan + H2O</text>
        <dbReference type="Rhea" id="RHEA:10532"/>
        <dbReference type="ChEBI" id="CHEBI:15377"/>
        <dbReference type="ChEBI" id="CHEBI:33384"/>
        <dbReference type="ChEBI" id="CHEBI:57912"/>
        <dbReference type="ChEBI" id="CHEBI:58866"/>
        <dbReference type="ChEBI" id="CHEBI:59776"/>
        <dbReference type="EC" id="4.2.1.20"/>
    </reaction>
</comment>
<comment type="pathway">
    <text evidence="1">Amino-acid biosynthesis; L-tryptophan biosynthesis; L-tryptophan from chorismate: step 5/5.</text>
</comment>
<comment type="subunit">
    <text evidence="1">Tetramer of two alpha and two beta chains.</text>
</comment>
<comment type="similarity">
    <text evidence="1">Belongs to the TrpA family.</text>
</comment>
<keyword id="KW-0028">Amino-acid biosynthesis</keyword>
<keyword id="KW-0057">Aromatic amino acid biosynthesis</keyword>
<keyword id="KW-0456">Lyase</keyword>
<keyword id="KW-1185">Reference proteome</keyword>
<keyword id="KW-0822">Tryptophan biosynthesis</keyword>
<dbReference type="EC" id="4.2.1.20" evidence="1"/>
<dbReference type="EMBL" id="CP000563">
    <property type="protein sequence ID" value="ABN62194.1"/>
    <property type="molecule type" value="Genomic_DNA"/>
</dbReference>
<dbReference type="RefSeq" id="WP_011847150.1">
    <property type="nucleotide sequence ID" value="NC_009052.1"/>
</dbReference>
<dbReference type="SMR" id="A3D631"/>
<dbReference type="STRING" id="325240.Sbal_2706"/>
<dbReference type="KEGG" id="sbl:Sbal_2706"/>
<dbReference type="HOGENOM" id="CLU_016734_0_4_6"/>
<dbReference type="OrthoDB" id="9804578at2"/>
<dbReference type="UniPathway" id="UPA00035">
    <property type="reaction ID" value="UER00044"/>
</dbReference>
<dbReference type="Proteomes" id="UP000001557">
    <property type="component" value="Chromosome"/>
</dbReference>
<dbReference type="GO" id="GO:0005829">
    <property type="term" value="C:cytosol"/>
    <property type="evidence" value="ECO:0007669"/>
    <property type="project" value="TreeGrafter"/>
</dbReference>
<dbReference type="GO" id="GO:0004834">
    <property type="term" value="F:tryptophan synthase activity"/>
    <property type="evidence" value="ECO:0007669"/>
    <property type="project" value="UniProtKB-UniRule"/>
</dbReference>
<dbReference type="CDD" id="cd04724">
    <property type="entry name" value="Tryptophan_synthase_alpha"/>
    <property type="match status" value="1"/>
</dbReference>
<dbReference type="FunFam" id="3.20.20.70:FF:000037">
    <property type="entry name" value="Tryptophan synthase alpha chain"/>
    <property type="match status" value="1"/>
</dbReference>
<dbReference type="Gene3D" id="3.20.20.70">
    <property type="entry name" value="Aldolase class I"/>
    <property type="match status" value="1"/>
</dbReference>
<dbReference type="HAMAP" id="MF_00131">
    <property type="entry name" value="Trp_synth_alpha"/>
    <property type="match status" value="1"/>
</dbReference>
<dbReference type="InterPro" id="IPR013785">
    <property type="entry name" value="Aldolase_TIM"/>
</dbReference>
<dbReference type="InterPro" id="IPR011060">
    <property type="entry name" value="RibuloseP-bd_barrel"/>
</dbReference>
<dbReference type="InterPro" id="IPR018204">
    <property type="entry name" value="Trp_synthase_alpha_AS"/>
</dbReference>
<dbReference type="InterPro" id="IPR002028">
    <property type="entry name" value="Trp_synthase_suA"/>
</dbReference>
<dbReference type="NCBIfam" id="TIGR00262">
    <property type="entry name" value="trpA"/>
    <property type="match status" value="1"/>
</dbReference>
<dbReference type="PANTHER" id="PTHR43406:SF1">
    <property type="entry name" value="TRYPTOPHAN SYNTHASE ALPHA CHAIN, CHLOROPLASTIC"/>
    <property type="match status" value="1"/>
</dbReference>
<dbReference type="PANTHER" id="PTHR43406">
    <property type="entry name" value="TRYPTOPHAN SYNTHASE, ALPHA CHAIN"/>
    <property type="match status" value="1"/>
</dbReference>
<dbReference type="Pfam" id="PF00290">
    <property type="entry name" value="Trp_syntA"/>
    <property type="match status" value="1"/>
</dbReference>
<dbReference type="SUPFAM" id="SSF51366">
    <property type="entry name" value="Ribulose-phoshate binding barrel"/>
    <property type="match status" value="1"/>
</dbReference>
<dbReference type="PROSITE" id="PS00167">
    <property type="entry name" value="TRP_SYNTHASE_ALPHA"/>
    <property type="match status" value="1"/>
</dbReference>
<proteinExistence type="inferred from homology"/>
<protein>
    <recommendedName>
        <fullName evidence="1">Tryptophan synthase alpha chain</fullName>
        <ecNumber evidence="1">4.2.1.20</ecNumber>
    </recommendedName>
</protein>
<reference key="1">
    <citation type="submission" date="2007-02" db="EMBL/GenBank/DDBJ databases">
        <title>Complete sequence of chromosome of Shewanella baltica OS155.</title>
        <authorList>
            <consortium name="US DOE Joint Genome Institute"/>
            <person name="Copeland A."/>
            <person name="Lucas S."/>
            <person name="Lapidus A."/>
            <person name="Barry K."/>
            <person name="Detter J.C."/>
            <person name="Glavina del Rio T."/>
            <person name="Hammon N."/>
            <person name="Israni S."/>
            <person name="Dalin E."/>
            <person name="Tice H."/>
            <person name="Pitluck S."/>
            <person name="Sims D.R."/>
            <person name="Brettin T."/>
            <person name="Bruce D."/>
            <person name="Han C."/>
            <person name="Tapia R."/>
            <person name="Brainard J."/>
            <person name="Schmutz J."/>
            <person name="Larimer F."/>
            <person name="Land M."/>
            <person name="Hauser L."/>
            <person name="Kyrpides N."/>
            <person name="Mikhailova N."/>
            <person name="Brettar I."/>
            <person name="Klappenbach J."/>
            <person name="Konstantinidis K."/>
            <person name="Rodrigues J."/>
            <person name="Tiedje J."/>
            <person name="Richardson P."/>
        </authorList>
    </citation>
    <scope>NUCLEOTIDE SEQUENCE [LARGE SCALE GENOMIC DNA]</scope>
    <source>
        <strain>OS155 / ATCC BAA-1091</strain>
    </source>
</reference>
<evidence type="ECO:0000255" key="1">
    <source>
        <dbReference type="HAMAP-Rule" id="MF_00131"/>
    </source>
</evidence>
<organism>
    <name type="scientific">Shewanella baltica (strain OS155 / ATCC BAA-1091)</name>
    <dbReference type="NCBI Taxonomy" id="325240"/>
    <lineage>
        <taxon>Bacteria</taxon>
        <taxon>Pseudomonadati</taxon>
        <taxon>Pseudomonadota</taxon>
        <taxon>Gammaproteobacteria</taxon>
        <taxon>Alteromonadales</taxon>
        <taxon>Shewanellaceae</taxon>
        <taxon>Shewanella</taxon>
    </lineage>
</organism>
<accession>A3D631</accession>
<sequence>MSDTLTNTGRYQATFAKLKAEGRGAFVPFVTLGDPSPELSLKIIDTLVQNGADALELGFPFSDPLADGPVIQGANLRSLAAGTTPTACFELLAQVRAKYPELPIGLLLYANLVFANGIDAFYAKAQQAGVDSVLIADVPVEESAPFSEAAKAHGIAPIFIAPPNADSETLALVSASGEGYTYLLSRAGVTGTDTKAGVPVEEILSKLKTFNAPPPLLGFGIAEPAQVSAAIKAGAAGAISGSAVVKIIETHQHDEAKLLATLGDFTRAMKAAT</sequence>
<gene>
    <name evidence="1" type="primary">trpA</name>
    <name type="ordered locus">Sbal_2706</name>
</gene>
<name>TRPA_SHEB5</name>
<feature type="chain" id="PRO_1000018278" description="Tryptophan synthase alpha chain">
    <location>
        <begin position="1"/>
        <end position="273"/>
    </location>
</feature>
<feature type="active site" description="Proton acceptor" evidence="1">
    <location>
        <position position="56"/>
    </location>
</feature>
<feature type="active site" description="Proton acceptor" evidence="1">
    <location>
        <position position="67"/>
    </location>
</feature>